<comment type="function">
    <text evidence="2">Component of the cytochrome c oxidase, the last enzyme in the mitochondrial electron transport chain which drives oxidative phosphorylation. The respiratory chain contains 3 multisubunit complexes succinate dehydrogenase (complex II, CII), ubiquinol-cytochrome c oxidoreductase (cytochrome b-c1 complex, complex III, CIII) and cytochrome c oxidase (complex IV, CIV), that cooperate to transfer electrons derived from NADH and succinate to molecular oxygen, creating an electrochemical gradient over the inner membrane that drives transmembrane transport and the ATP synthase. Cytochrome c oxidase is the component of the respiratory chain that catalyzes the reduction of oxygen to water. Electrons originating from reduced cytochrome c in the intermembrane space (IMS) are transferred via the dinuclear copper A center (CU(A)) of subunit 2 and heme A of subunit 1 to the active site in subunit 1, a binuclear center (BNC) formed by heme A3 and copper B (CU(B)). The BNC reduces molecular oxygen to 2 water molecules using 4 electrons from cytochrome c in the IMS and 4 protons from the mitochondrial matrix.</text>
</comment>
<comment type="catalytic activity">
    <reaction evidence="2">
        <text>4 Fe(II)-[cytochrome c] + O2 + 8 H(+)(in) = 4 Fe(III)-[cytochrome c] + 2 H2O + 4 H(+)(out)</text>
        <dbReference type="Rhea" id="RHEA:11436"/>
        <dbReference type="Rhea" id="RHEA-COMP:10350"/>
        <dbReference type="Rhea" id="RHEA-COMP:14399"/>
        <dbReference type="ChEBI" id="CHEBI:15377"/>
        <dbReference type="ChEBI" id="CHEBI:15378"/>
        <dbReference type="ChEBI" id="CHEBI:15379"/>
        <dbReference type="ChEBI" id="CHEBI:29033"/>
        <dbReference type="ChEBI" id="CHEBI:29034"/>
        <dbReference type="EC" id="7.1.1.9"/>
    </reaction>
    <physiologicalReaction direction="left-to-right" evidence="2">
        <dbReference type="Rhea" id="RHEA:11437"/>
    </physiologicalReaction>
</comment>
<comment type="subunit">
    <text evidence="1">Component of the cytochrome c oxidase (complex IV, CIV), a multisubunit enzyme composed of 14 subunits. The complex is composed of a catalytic core of 3 subunits MT-CO1, MT-CO2 and MT-CO3, encoded in the mitochondrial DNA, and 11 supernumerary subunits COX4I, COX5A, COX5B, COX6A, COX6B, COX6C, COX7A, COX7B, COX7C, COX8 and NDUFA4, which are encoded in the nuclear genome. The complex exists as a monomer or a dimer and forms supercomplexes (SCs) in the inner mitochondrial membrane with NADH-ubiquinone oxidoreductase (complex I, CI) and ubiquinol-cytochrome c oxidoreductase (cytochrome b-c1 complex, complex III, CIII), resulting in different assemblies (supercomplex SCI(1)III(2)IV(1) and megacomplex MCI(2)III(2)IV(2)).</text>
</comment>
<comment type="subcellular location">
    <subcellularLocation>
        <location evidence="1">Mitochondrion inner membrane</location>
        <topology evidence="1">Multi-pass membrane protein</topology>
    </subcellularLocation>
</comment>
<comment type="similarity">
    <text evidence="3">Belongs to the cytochrome c oxidase subunit 3 family.</text>
</comment>
<gene>
    <name type="primary">MT-CO3</name>
    <name type="synonym">COIII</name>
    <name type="synonym">COXIII</name>
    <name type="synonym">MTCO3</name>
</gene>
<geneLocation type="mitochondrion"/>
<feature type="chain" id="PRO_0000183867" description="Cytochrome c oxidase subunit 3">
    <location>
        <begin position="1"/>
        <end position="261"/>
    </location>
</feature>
<feature type="topological domain" description="Mitochondrial matrix" evidence="1">
    <location>
        <begin position="1"/>
        <end position="15"/>
    </location>
</feature>
<feature type="transmembrane region" description="Helical; Name=I" evidence="1">
    <location>
        <begin position="16"/>
        <end position="34"/>
    </location>
</feature>
<feature type="topological domain" description="Mitochondrial intermembrane" evidence="1">
    <location>
        <begin position="35"/>
        <end position="40"/>
    </location>
</feature>
<feature type="transmembrane region" description="Helical; Name=II" evidence="1">
    <location>
        <begin position="41"/>
        <end position="66"/>
    </location>
</feature>
<feature type="topological domain" description="Mitochondrial matrix" evidence="1">
    <location>
        <begin position="67"/>
        <end position="72"/>
    </location>
</feature>
<feature type="transmembrane region" description="Helical; Name=III" evidence="1">
    <location>
        <begin position="73"/>
        <end position="105"/>
    </location>
</feature>
<feature type="topological domain" description="Mitochondrial intermembrane" evidence="1">
    <location>
        <begin position="106"/>
        <end position="128"/>
    </location>
</feature>
<feature type="transmembrane region" description="Helical; Name=IV" evidence="1">
    <location>
        <begin position="129"/>
        <end position="152"/>
    </location>
</feature>
<feature type="topological domain" description="Mitochondrial matrix" evidence="1">
    <location>
        <begin position="153"/>
        <end position="155"/>
    </location>
</feature>
<feature type="transmembrane region" description="Helical; Name=V" evidence="1">
    <location>
        <begin position="156"/>
        <end position="183"/>
    </location>
</feature>
<feature type="topological domain" description="Mitochondrial intermembrane" evidence="1">
    <location>
        <begin position="184"/>
        <end position="190"/>
    </location>
</feature>
<feature type="transmembrane region" description="Helical; Name=VI" evidence="1">
    <location>
        <begin position="191"/>
        <end position="223"/>
    </location>
</feature>
<feature type="topological domain" description="Mitochondrial matrix" evidence="1">
    <location>
        <begin position="224"/>
        <end position="232"/>
    </location>
</feature>
<feature type="transmembrane region" description="Helical; Name=VII" evidence="1">
    <location>
        <begin position="233"/>
        <end position="256"/>
    </location>
</feature>
<feature type="topological domain" description="Mitochondrial intermembrane" evidence="1">
    <location>
        <begin position="257"/>
        <end position="261"/>
    </location>
</feature>
<name>COX3_TRAST</name>
<dbReference type="EC" id="7.1.1.9"/>
<dbReference type="EMBL" id="AF030278">
    <property type="protein sequence ID" value="AAB92240.1"/>
    <property type="molecule type" value="Genomic_DNA"/>
</dbReference>
<dbReference type="SMR" id="O47689"/>
<dbReference type="CTD" id="4514"/>
<dbReference type="GO" id="GO:0005743">
    <property type="term" value="C:mitochondrial inner membrane"/>
    <property type="evidence" value="ECO:0007669"/>
    <property type="project" value="UniProtKB-SubCell"/>
</dbReference>
<dbReference type="GO" id="GO:0045277">
    <property type="term" value="C:respiratory chain complex IV"/>
    <property type="evidence" value="ECO:0000250"/>
    <property type="project" value="UniProtKB"/>
</dbReference>
<dbReference type="GO" id="GO:0004129">
    <property type="term" value="F:cytochrome-c oxidase activity"/>
    <property type="evidence" value="ECO:0007669"/>
    <property type="project" value="UniProtKB-EC"/>
</dbReference>
<dbReference type="GO" id="GO:0006123">
    <property type="term" value="P:mitochondrial electron transport, cytochrome c to oxygen"/>
    <property type="evidence" value="ECO:0007669"/>
    <property type="project" value="TreeGrafter"/>
</dbReference>
<dbReference type="GO" id="GO:0008535">
    <property type="term" value="P:respiratory chain complex IV assembly"/>
    <property type="evidence" value="ECO:0000250"/>
    <property type="project" value="UniProtKB"/>
</dbReference>
<dbReference type="CDD" id="cd01665">
    <property type="entry name" value="Cyt_c_Oxidase_III"/>
    <property type="match status" value="1"/>
</dbReference>
<dbReference type="FunFam" id="1.10.287.70:FF:000048">
    <property type="entry name" value="Cytochrome c oxidase subunit 3"/>
    <property type="match status" value="1"/>
</dbReference>
<dbReference type="FunFam" id="1.20.120.80:FF:000002">
    <property type="entry name" value="Cytochrome c oxidase subunit 3"/>
    <property type="match status" value="1"/>
</dbReference>
<dbReference type="Gene3D" id="1.10.287.70">
    <property type="match status" value="1"/>
</dbReference>
<dbReference type="Gene3D" id="1.20.120.80">
    <property type="entry name" value="Cytochrome c oxidase, subunit III, four-helix bundle"/>
    <property type="match status" value="1"/>
</dbReference>
<dbReference type="InterPro" id="IPR024791">
    <property type="entry name" value="Cyt_c/ubiquinol_Oxase_su3"/>
</dbReference>
<dbReference type="InterPro" id="IPR033945">
    <property type="entry name" value="Cyt_c_oxase_su3_dom"/>
</dbReference>
<dbReference type="InterPro" id="IPR000298">
    <property type="entry name" value="Cyt_c_oxidase-like_su3"/>
</dbReference>
<dbReference type="InterPro" id="IPR035973">
    <property type="entry name" value="Cyt_c_oxidase_su3-like_sf"/>
</dbReference>
<dbReference type="InterPro" id="IPR013833">
    <property type="entry name" value="Cyt_c_oxidase_su3_a-hlx"/>
</dbReference>
<dbReference type="PANTHER" id="PTHR11403:SF7">
    <property type="entry name" value="CYTOCHROME C OXIDASE SUBUNIT 3"/>
    <property type="match status" value="1"/>
</dbReference>
<dbReference type="PANTHER" id="PTHR11403">
    <property type="entry name" value="CYTOCHROME C OXIDASE SUBUNIT III"/>
    <property type="match status" value="1"/>
</dbReference>
<dbReference type="Pfam" id="PF00510">
    <property type="entry name" value="COX3"/>
    <property type="match status" value="1"/>
</dbReference>
<dbReference type="SUPFAM" id="SSF81452">
    <property type="entry name" value="Cytochrome c oxidase subunit III-like"/>
    <property type="match status" value="1"/>
</dbReference>
<dbReference type="PROSITE" id="PS50253">
    <property type="entry name" value="COX3"/>
    <property type="match status" value="1"/>
</dbReference>
<reference key="1">
    <citation type="journal article" date="1999" name="Mol. Phylogenet. Evol.">
        <title>Phylogenetic relationships in the bovid subfamily Antilopinae based on mitochondrial DNA sequences.</title>
        <authorList>
            <person name="Rebholz W.E.R."/>
            <person name="Harley E.H."/>
        </authorList>
    </citation>
    <scope>NUCLEOTIDE SEQUENCE [GENOMIC DNA]</scope>
</reference>
<sequence length="261" mass="29908">MTHQTHAYHMVNPSPWPLTGALSALLMTSGLTMWFHFNSTILLMLGLTTNMLTMYQWWRDIIRESTFQGHHTPVVQKGLRYGMILFIISEVLFFTGFFWAFYHSSLAPTPELGGCWPPTGIHPLNPLEVPLLNTSVLLASGVSITWAHHSLMEGHRNHMLQALFITIALGVYFTLLQASEYYEAPFTISDGVYGSTFFVATGFHGLHVIIGSTFLIVCFFRQLKFHFTSSHHFGFEAAAWYWHFVDVVWLFLYVSIYWWGS</sequence>
<organism>
    <name type="scientific">Tragelaphus strepsiceros</name>
    <name type="common">Greater kudu</name>
    <dbReference type="NCBI Taxonomy" id="9946"/>
    <lineage>
        <taxon>Eukaryota</taxon>
        <taxon>Metazoa</taxon>
        <taxon>Chordata</taxon>
        <taxon>Craniata</taxon>
        <taxon>Vertebrata</taxon>
        <taxon>Euteleostomi</taxon>
        <taxon>Mammalia</taxon>
        <taxon>Eutheria</taxon>
        <taxon>Laurasiatheria</taxon>
        <taxon>Artiodactyla</taxon>
        <taxon>Ruminantia</taxon>
        <taxon>Pecora</taxon>
        <taxon>Bovidae</taxon>
        <taxon>Bovinae</taxon>
        <taxon>Tragelaphus</taxon>
    </lineage>
</organism>
<accession>O47689</accession>
<protein>
    <recommendedName>
        <fullName>Cytochrome c oxidase subunit 3</fullName>
        <ecNumber>7.1.1.9</ecNumber>
    </recommendedName>
    <alternativeName>
        <fullName>Cytochrome c oxidase polypeptide III</fullName>
    </alternativeName>
</protein>
<evidence type="ECO:0000250" key="1">
    <source>
        <dbReference type="UniProtKB" id="P00415"/>
    </source>
</evidence>
<evidence type="ECO:0000250" key="2">
    <source>
        <dbReference type="UniProtKB" id="P00420"/>
    </source>
</evidence>
<evidence type="ECO:0000305" key="3"/>
<proteinExistence type="inferred from homology"/>
<keyword id="KW-0472">Membrane</keyword>
<keyword id="KW-0496">Mitochondrion</keyword>
<keyword id="KW-0999">Mitochondrion inner membrane</keyword>
<keyword id="KW-1278">Translocase</keyword>
<keyword id="KW-0812">Transmembrane</keyword>
<keyword id="KW-1133">Transmembrane helix</keyword>